<gene>
    <name evidence="9" type="primary">swnH1</name>
    <name type="ORF">ARB_07839</name>
</gene>
<sequence>MPEFPPPIDPSYVPSVSLTRIPANAPIEDILAVLERDGGLILTDIISSQDVAAINDELDPYVQKARAESHAAYDLIPKQTIMVPGIVGKSPTMAKIAEYEVIDKLRTMVLQKKCTATWEDRTEEFTIGPLLNSSLTYNVSYGGPRQRLHRDDMIHGIYHHDGEYSLSNETMLGFMFAGCKTTRENGATMAIPGSHKWNHTRVPRTDEVCFAEMEPGSAFVFLGTVYHGAGHNSVPDQVRKVYGLFFISGTLRPEENQFLAIPRSKVLGMSDKMLSLLGYKKPETWLGIVNNGDPAENLKEVLDMANS</sequence>
<accession>D4AU26</accession>
<protein>
    <recommendedName>
        <fullName evidence="9">Dioxygenase swnH1</fullName>
        <ecNumber evidence="11">1.14.11.-</ecNumber>
    </recommendedName>
    <alternativeName>
        <fullName evidence="9">Swainsonine biosynthesis gene cluster protein H1</fullName>
    </alternativeName>
</protein>
<name>SWNH1_ARTBC</name>
<organism>
    <name type="scientific">Arthroderma benhamiae (strain ATCC MYA-4681 / CBS 112371)</name>
    <name type="common">Trichophyton mentagrophytes</name>
    <dbReference type="NCBI Taxonomy" id="663331"/>
    <lineage>
        <taxon>Eukaryota</taxon>
        <taxon>Fungi</taxon>
        <taxon>Dikarya</taxon>
        <taxon>Ascomycota</taxon>
        <taxon>Pezizomycotina</taxon>
        <taxon>Eurotiomycetes</taxon>
        <taxon>Eurotiomycetidae</taxon>
        <taxon>Onygenales</taxon>
        <taxon>Arthrodermataceae</taxon>
        <taxon>Trichophyton</taxon>
    </lineage>
</organism>
<dbReference type="EC" id="1.14.11.-" evidence="11"/>
<dbReference type="EMBL" id="ABSU01000010">
    <property type="protein sequence ID" value="EFE33479.1"/>
    <property type="molecule type" value="Genomic_DNA"/>
</dbReference>
<dbReference type="RefSeq" id="XP_003014119.1">
    <property type="nucleotide sequence ID" value="XM_003014073.1"/>
</dbReference>
<dbReference type="SMR" id="D4AU26"/>
<dbReference type="STRING" id="663331.D4AU26"/>
<dbReference type="GeneID" id="9521536"/>
<dbReference type="KEGG" id="abe:ARB_07839"/>
<dbReference type="eggNOG" id="ENOG502SIE1">
    <property type="taxonomic scope" value="Eukaryota"/>
</dbReference>
<dbReference type="HOGENOM" id="CLU_047725_0_0_1"/>
<dbReference type="OMA" id="YKKPTTA"/>
<dbReference type="Proteomes" id="UP000008866">
    <property type="component" value="Unassembled WGS sequence"/>
</dbReference>
<dbReference type="GO" id="GO:0051213">
    <property type="term" value="F:dioxygenase activity"/>
    <property type="evidence" value="ECO:0007669"/>
    <property type="project" value="UniProtKB-KW"/>
</dbReference>
<dbReference type="GO" id="GO:0046872">
    <property type="term" value="F:metal ion binding"/>
    <property type="evidence" value="ECO:0007669"/>
    <property type="project" value="UniProtKB-KW"/>
</dbReference>
<dbReference type="Gene3D" id="2.60.120.620">
    <property type="entry name" value="q2cbj1_9rhob like domain"/>
    <property type="match status" value="1"/>
</dbReference>
<dbReference type="InterPro" id="IPR008775">
    <property type="entry name" value="Phytyl_CoA_dOase-like"/>
</dbReference>
<dbReference type="PANTHER" id="PTHR20883">
    <property type="entry name" value="PHYTANOYL-COA DIOXYGENASE DOMAIN CONTAINING 1"/>
    <property type="match status" value="1"/>
</dbReference>
<dbReference type="PANTHER" id="PTHR20883:SF45">
    <property type="entry name" value="PHYTANOYL-COA DIOXYGENASE FAMILY PROTEIN"/>
    <property type="match status" value="1"/>
</dbReference>
<dbReference type="Pfam" id="PF05721">
    <property type="entry name" value="PhyH"/>
    <property type="match status" value="1"/>
</dbReference>
<dbReference type="SUPFAM" id="SSF51197">
    <property type="entry name" value="Clavaminate synthase-like"/>
    <property type="match status" value="1"/>
</dbReference>
<keyword id="KW-0223">Dioxygenase</keyword>
<keyword id="KW-0408">Iron</keyword>
<keyword id="KW-0479">Metal-binding</keyword>
<keyword id="KW-0560">Oxidoreductase</keyword>
<keyword id="KW-1185">Reference proteome</keyword>
<feature type="chain" id="PRO_0000441183" description="Dioxygenase swnH1">
    <location>
        <begin position="1"/>
        <end position="307"/>
    </location>
</feature>
<feature type="binding site" evidence="6">
    <location>
        <position position="149"/>
    </location>
    <ligand>
        <name>Fe cation</name>
        <dbReference type="ChEBI" id="CHEBI:24875"/>
    </ligand>
</feature>
<feature type="binding site" evidence="6">
    <location>
        <position position="151"/>
    </location>
    <ligand>
        <name>Fe cation</name>
        <dbReference type="ChEBI" id="CHEBI:24875"/>
    </ligand>
</feature>
<feature type="binding site" evidence="6">
    <location>
        <position position="227"/>
    </location>
    <ligand>
        <name>Fe cation</name>
        <dbReference type="ChEBI" id="CHEBI:24875"/>
    </ligand>
</feature>
<proteinExistence type="inferred from homology"/>
<comment type="function">
    <text evidence="1 2 3 4 5 8">Dioxygenase; part of the gene cluster that mediates the biosynthesis of swainsonine (SW), a cytotoxic fungal alkaloid and a potential cancer therapy drug (PubMed:28381497). Swainsonine production occurs via a multibranched pathway and is dispensable for fungal colonization of plants and infection of insect hosts (By similarity). The first step of swainsonine biosynthesis is the production of the precursor pipecolic acid (PA) via conversion of L-lysine (Lys) to 1-piperideine-6-carboxylate (P6C) by the aminotransferase swnA, the latter being further reduced to PA by the reductase swnR (By similarity). The PKS-NRPS hybrid synthetase swnK uptakes and condensates PA and malonyl-CoA with and without skipping of the ketoreductase (KR) domain in order to produce 3 intermediates, 1-oxoindolizidine, (1S)-1-hydroxyindolizin, and (1R)-1-hydroxyindolizine; with the transisomer (1S)-1-hydroxyindolizin being predominant (By similarity). The terminal thioester reductase (TE) domain of swnK is involved in reduction of the thioester bond to release the intermediate aldehydes (By similarity). The oxidoreductase swnN could contribute to the reduction of 1-oxoindolizidine to (1S)-1-hydroxyindolizin and (1R)-1-hydroxyindolizine, contributing to the major route of SW production (By similarity). The dioxygenase swnH2 would be responsible for the oxidization of (1R)-1-hydroxyindolizine into (1R,2S)-1,2-dihydroxyindolizine and of (1S)-1-hydroxyindolizin to yield both (1R,2S)-1,2-dihydroxyindolizine and (1S,2S)-1,2-dihydroxyindolizine (By similarity). The dioxygenase swnH1 then performs the conversion of the 1,2-dihydroxyindolizine epimers to SW (By similarity).</text>
</comment>
<comment type="cofactor">
    <cofactor evidence="7">
        <name>Fe cation</name>
        <dbReference type="ChEBI" id="CHEBI:24875"/>
    </cofactor>
</comment>
<comment type="pathway">
    <text evidence="11">Mycotoxin biosynthesis.</text>
</comment>
<comment type="subunit">
    <text evidence="7">Homodimer.</text>
</comment>
<comment type="similarity">
    <text evidence="10">Belongs to the PhyH family.</text>
</comment>
<reference key="1">
    <citation type="journal article" date="2011" name="Genome Biol.">
        <title>Comparative and functional genomics provide insights into the pathogenicity of dermatophytic fungi.</title>
        <authorList>
            <person name="Burmester A."/>
            <person name="Shelest E."/>
            <person name="Gloeckner G."/>
            <person name="Heddergott C."/>
            <person name="Schindler S."/>
            <person name="Staib P."/>
            <person name="Heidel A."/>
            <person name="Felder M."/>
            <person name="Petzold A."/>
            <person name="Szafranski K."/>
            <person name="Feuermann M."/>
            <person name="Pedruzzi I."/>
            <person name="Priebe S."/>
            <person name="Groth M."/>
            <person name="Winkler R."/>
            <person name="Li W."/>
            <person name="Kniemeyer O."/>
            <person name="Schroeckh V."/>
            <person name="Hertweck C."/>
            <person name="Hube B."/>
            <person name="White T.C."/>
            <person name="Platzer M."/>
            <person name="Guthke R."/>
            <person name="Heitman J."/>
            <person name="Woestemeyer J."/>
            <person name="Zipfel P.F."/>
            <person name="Monod M."/>
            <person name="Brakhage A.A."/>
        </authorList>
    </citation>
    <scope>NUCLEOTIDE SEQUENCE [LARGE SCALE GENOMIC DNA]</scope>
    <source>
        <strain>ATCC MYA-4681 / CBS 112371</strain>
    </source>
</reference>
<reference key="2">
    <citation type="journal article" date="2017" name="G3 (Bethesda)">
        <title>Swainsonine biosynthesis genes in diverse symbiotic and pathogenic fungi.</title>
        <authorList>
            <person name="Cook D."/>
            <person name="Donzelli B.G."/>
            <person name="Creamer R."/>
            <person name="Baucom D.L."/>
            <person name="Gardner D.R."/>
            <person name="Pan J."/>
            <person name="Moore N."/>
            <person name="Jaromczyk J.W."/>
            <person name="Schardl C.L."/>
        </authorList>
    </citation>
    <scope>IDENTIFICATION</scope>
    <scope>PATHWAY</scope>
</reference>
<evidence type="ECO:0000250" key="1">
    <source>
        <dbReference type="UniProtKB" id="E9F8L8"/>
    </source>
</evidence>
<evidence type="ECO:0000250" key="2">
    <source>
        <dbReference type="UniProtKB" id="E9F8L9"/>
    </source>
</evidence>
<evidence type="ECO:0000250" key="3">
    <source>
        <dbReference type="UniProtKB" id="E9F8M1"/>
    </source>
</evidence>
<evidence type="ECO:0000250" key="4">
    <source>
        <dbReference type="UniProtKB" id="E9F8M3"/>
    </source>
</evidence>
<evidence type="ECO:0000250" key="5">
    <source>
        <dbReference type="UniProtKB" id="E9F8M4"/>
    </source>
</evidence>
<evidence type="ECO:0000250" key="6">
    <source>
        <dbReference type="UniProtKB" id="O14832"/>
    </source>
</evidence>
<evidence type="ECO:0000250" key="7">
    <source>
        <dbReference type="UniProtKB" id="Q4WAW9"/>
    </source>
</evidence>
<evidence type="ECO:0000269" key="8">
    <source>
    </source>
</evidence>
<evidence type="ECO:0000303" key="9">
    <source>
    </source>
</evidence>
<evidence type="ECO:0000305" key="10"/>
<evidence type="ECO:0000305" key="11">
    <source>
    </source>
</evidence>